<organism>
    <name type="scientific">Mus musculus</name>
    <name type="common">Mouse</name>
    <dbReference type="NCBI Taxonomy" id="10090"/>
    <lineage>
        <taxon>Eukaryota</taxon>
        <taxon>Metazoa</taxon>
        <taxon>Chordata</taxon>
        <taxon>Craniata</taxon>
        <taxon>Vertebrata</taxon>
        <taxon>Euteleostomi</taxon>
        <taxon>Mammalia</taxon>
        <taxon>Eutheria</taxon>
        <taxon>Euarchontoglires</taxon>
        <taxon>Glires</taxon>
        <taxon>Rodentia</taxon>
        <taxon>Myomorpha</taxon>
        <taxon>Muroidea</taxon>
        <taxon>Muridae</taxon>
        <taxon>Murinae</taxon>
        <taxon>Mus</taxon>
        <taxon>Mus</taxon>
    </lineage>
</organism>
<name>TCEA2_MOUSE</name>
<protein>
    <recommendedName>
        <fullName>Transcription elongation factor A protein 2</fullName>
    </recommendedName>
    <alternativeName>
        <fullName>Protein S-II-T1</fullName>
    </alternativeName>
    <alternativeName>
        <fullName>Testis-specific S-II</fullName>
    </alternativeName>
    <alternativeName>
        <fullName>Transcription elongation factor S-II protein 2</fullName>
    </alternativeName>
    <alternativeName>
        <fullName>Transcription elongation factor TFIIS.l</fullName>
    </alternativeName>
</protein>
<sequence>MGKEEEIARIARRLDKMVTRKNAEGAMDLLRELKNMPITLHLLQSTRVGMSVNALRKQSSDEELIALAKSLIKSWKKLLDVSDGKSRNQGRGTPLPTSSSKDASRTTDLSCKKPDPPRTPSTPRITTFPQVPITCDAVRNKCREMLTLALQTDHDHVAVGVNCEHLSSQIEECIFLDVGNTDMKYKNRVRSRISNLKDAKNPGLRRNVLCGAITPQQIAVMTSEEMASDELKEIRKAMTKEAIREHQMARTGGTQTDLFTCNKCRKKNCTYTQVQTRSSDEPMTTYVVCNECGNRWKFC</sequence>
<dbReference type="EMBL" id="D86081">
    <property type="protein sequence ID" value="BAA19752.1"/>
    <property type="molecule type" value="mRNA"/>
</dbReference>
<dbReference type="EMBL" id="AB010271">
    <property type="protein sequence ID" value="BAA82313.1"/>
    <property type="molecule type" value="mRNA"/>
</dbReference>
<dbReference type="CCDS" id="CCDS17219.1"/>
<dbReference type="PIR" id="JC5430">
    <property type="entry name" value="JC5430"/>
</dbReference>
<dbReference type="RefSeq" id="NP_033352.1">
    <property type="nucleotide sequence ID" value="NM_009326.3"/>
</dbReference>
<dbReference type="SMR" id="Q9QVN7"/>
<dbReference type="FunCoup" id="Q9QVN7">
    <property type="interactions" value="2810"/>
</dbReference>
<dbReference type="STRING" id="10090.ENSMUSP00000099331"/>
<dbReference type="PhosphoSitePlus" id="Q9QVN7"/>
<dbReference type="SwissPalm" id="Q9QVN7"/>
<dbReference type="PaxDb" id="10090-ENSMUSP00000099331"/>
<dbReference type="ProteomicsDB" id="254677"/>
<dbReference type="Antibodypedia" id="15504">
    <property type="antibodies" value="132 antibodies from 17 providers"/>
</dbReference>
<dbReference type="DNASU" id="21400"/>
<dbReference type="Ensembl" id="ENSMUST00000103042.10">
    <property type="protein sequence ID" value="ENSMUSP00000099331.4"/>
    <property type="gene ID" value="ENSMUSG00000059540.16"/>
</dbReference>
<dbReference type="GeneID" id="21400"/>
<dbReference type="KEGG" id="mmu:21400"/>
<dbReference type="UCSC" id="uc012cmu.2">
    <property type="organism name" value="mouse"/>
</dbReference>
<dbReference type="AGR" id="MGI:107368"/>
<dbReference type="CTD" id="6919"/>
<dbReference type="MGI" id="MGI:107368">
    <property type="gene designation" value="Tcea2"/>
</dbReference>
<dbReference type="VEuPathDB" id="HostDB:ENSMUSG00000059540"/>
<dbReference type="eggNOG" id="KOG1105">
    <property type="taxonomic scope" value="Eukaryota"/>
</dbReference>
<dbReference type="GeneTree" id="ENSGT00940000159974"/>
<dbReference type="HOGENOM" id="CLU_037637_2_0_1"/>
<dbReference type="InParanoid" id="Q9QVN7"/>
<dbReference type="OMA" id="DACDPFR"/>
<dbReference type="OrthoDB" id="44867at2759"/>
<dbReference type="PhylomeDB" id="Q9QVN7"/>
<dbReference type="TreeFam" id="TF314970"/>
<dbReference type="BioGRID-ORCS" id="21400">
    <property type="hits" value="2 hits in 78 CRISPR screens"/>
</dbReference>
<dbReference type="PRO" id="PR:Q9QVN7"/>
<dbReference type="Proteomes" id="UP000000589">
    <property type="component" value="Chromosome 2"/>
</dbReference>
<dbReference type="RNAct" id="Q9QVN7">
    <property type="molecule type" value="protein"/>
</dbReference>
<dbReference type="Bgee" id="ENSMUSG00000059540">
    <property type="expression patterns" value="Expressed in spermatocyte and 173 other cell types or tissues"/>
</dbReference>
<dbReference type="ExpressionAtlas" id="Q9QVN7">
    <property type="expression patterns" value="baseline and differential"/>
</dbReference>
<dbReference type="GO" id="GO:0005813">
    <property type="term" value="C:centrosome"/>
    <property type="evidence" value="ECO:0007669"/>
    <property type="project" value="Ensembl"/>
</dbReference>
<dbReference type="GO" id="GO:0036064">
    <property type="term" value="C:ciliary basal body"/>
    <property type="evidence" value="ECO:0007669"/>
    <property type="project" value="Ensembl"/>
</dbReference>
<dbReference type="GO" id="GO:0005654">
    <property type="term" value="C:nucleoplasm"/>
    <property type="evidence" value="ECO:0007669"/>
    <property type="project" value="Ensembl"/>
</dbReference>
<dbReference type="GO" id="GO:0003677">
    <property type="term" value="F:DNA binding"/>
    <property type="evidence" value="ECO:0007669"/>
    <property type="project" value="UniProtKB-KW"/>
</dbReference>
<dbReference type="GO" id="GO:0008270">
    <property type="term" value="F:zinc ion binding"/>
    <property type="evidence" value="ECO:0007669"/>
    <property type="project" value="UniProtKB-KW"/>
</dbReference>
<dbReference type="GO" id="GO:0006368">
    <property type="term" value="P:transcription elongation by RNA polymerase II"/>
    <property type="evidence" value="ECO:0007669"/>
    <property type="project" value="InterPro"/>
</dbReference>
<dbReference type="CDD" id="cd00183">
    <property type="entry name" value="TFIIS_I"/>
    <property type="match status" value="1"/>
</dbReference>
<dbReference type="CDD" id="cd13749">
    <property type="entry name" value="Zn-ribbon_TFIIS"/>
    <property type="match status" value="1"/>
</dbReference>
<dbReference type="FunFam" id="2.20.25.10:FF:000001">
    <property type="entry name" value="Probable Transcription elongation factor S-II"/>
    <property type="match status" value="1"/>
</dbReference>
<dbReference type="FunFam" id="1.20.930.10:FF:000002">
    <property type="entry name" value="Transcription elongation factor A (SII), 1"/>
    <property type="match status" value="1"/>
</dbReference>
<dbReference type="Gene3D" id="2.20.25.10">
    <property type="match status" value="1"/>
</dbReference>
<dbReference type="Gene3D" id="1.20.930.10">
    <property type="entry name" value="Conserved domain common to transcription factors TFIIS, elongin A, CRSP70"/>
    <property type="match status" value="1"/>
</dbReference>
<dbReference type="Gene3D" id="1.10.472.30">
    <property type="entry name" value="Transcription elongation factor S-II, central domain"/>
    <property type="match status" value="1"/>
</dbReference>
<dbReference type="InterPro" id="IPR035100">
    <property type="entry name" value="TF_IIS-typ"/>
</dbReference>
<dbReference type="InterPro" id="IPR003617">
    <property type="entry name" value="TFIIS/CRSP70_N_sub"/>
</dbReference>
<dbReference type="InterPro" id="IPR035441">
    <property type="entry name" value="TFIIS/LEDGF_dom_sf"/>
</dbReference>
<dbReference type="InterPro" id="IPR003618">
    <property type="entry name" value="TFIIS_cen_dom"/>
</dbReference>
<dbReference type="InterPro" id="IPR036575">
    <property type="entry name" value="TFIIS_cen_dom_sf"/>
</dbReference>
<dbReference type="InterPro" id="IPR017923">
    <property type="entry name" value="TFIIS_N"/>
</dbReference>
<dbReference type="InterPro" id="IPR006289">
    <property type="entry name" value="TFSII"/>
</dbReference>
<dbReference type="InterPro" id="IPR001222">
    <property type="entry name" value="Znf_TFIIS"/>
</dbReference>
<dbReference type="NCBIfam" id="TIGR01385">
    <property type="entry name" value="TFSII"/>
    <property type="match status" value="1"/>
</dbReference>
<dbReference type="PANTHER" id="PTHR11477:SF3">
    <property type="entry name" value="TRANSCRIPTION ELONGATION FACTOR A PROTEIN 2"/>
    <property type="match status" value="1"/>
</dbReference>
<dbReference type="PANTHER" id="PTHR11477">
    <property type="entry name" value="TRANSCRIPTION FACTOR S-II ZINC FINGER DOMAIN-CONTAINING PROTEIN"/>
    <property type="match status" value="1"/>
</dbReference>
<dbReference type="Pfam" id="PF08711">
    <property type="entry name" value="Med26"/>
    <property type="match status" value="1"/>
</dbReference>
<dbReference type="Pfam" id="PF07500">
    <property type="entry name" value="TFIIS_M"/>
    <property type="match status" value="1"/>
</dbReference>
<dbReference type="Pfam" id="PF01096">
    <property type="entry name" value="Zn_ribbon_TFIIS"/>
    <property type="match status" value="1"/>
</dbReference>
<dbReference type="PIRSF" id="PIRSF006704">
    <property type="entry name" value="TF_IIS"/>
    <property type="match status" value="1"/>
</dbReference>
<dbReference type="SMART" id="SM00510">
    <property type="entry name" value="TFS2M"/>
    <property type="match status" value="1"/>
</dbReference>
<dbReference type="SMART" id="SM00509">
    <property type="entry name" value="TFS2N"/>
    <property type="match status" value="1"/>
</dbReference>
<dbReference type="SMART" id="SM00440">
    <property type="entry name" value="ZnF_C2C2"/>
    <property type="match status" value="1"/>
</dbReference>
<dbReference type="SUPFAM" id="SSF47676">
    <property type="entry name" value="Conserved domain common to transcription factors TFIIS, elongin A, CRSP70"/>
    <property type="match status" value="1"/>
</dbReference>
<dbReference type="SUPFAM" id="SSF46942">
    <property type="entry name" value="Elongation factor TFIIS domain 2"/>
    <property type="match status" value="1"/>
</dbReference>
<dbReference type="SUPFAM" id="SSF57783">
    <property type="entry name" value="Zinc beta-ribbon"/>
    <property type="match status" value="1"/>
</dbReference>
<dbReference type="PROSITE" id="PS51321">
    <property type="entry name" value="TFIIS_CENTRAL"/>
    <property type="match status" value="1"/>
</dbReference>
<dbReference type="PROSITE" id="PS51319">
    <property type="entry name" value="TFIIS_N"/>
    <property type="match status" value="1"/>
</dbReference>
<dbReference type="PROSITE" id="PS00466">
    <property type="entry name" value="ZF_TFIIS_1"/>
    <property type="match status" value="1"/>
</dbReference>
<dbReference type="PROSITE" id="PS51133">
    <property type="entry name" value="ZF_TFIIS_2"/>
    <property type="match status" value="1"/>
</dbReference>
<gene>
    <name type="primary">Tcea2</name>
</gene>
<proteinExistence type="evidence at transcript level"/>
<evidence type="ECO:0000250" key="1"/>
<evidence type="ECO:0000250" key="2">
    <source>
        <dbReference type="UniProtKB" id="P23193"/>
    </source>
</evidence>
<evidence type="ECO:0000250" key="3">
    <source>
        <dbReference type="UniProtKB" id="Q15560"/>
    </source>
</evidence>
<evidence type="ECO:0000255" key="4">
    <source>
        <dbReference type="PROSITE-ProRule" id="PRU00472"/>
    </source>
</evidence>
<evidence type="ECO:0000255" key="5">
    <source>
        <dbReference type="PROSITE-ProRule" id="PRU00649"/>
    </source>
</evidence>
<evidence type="ECO:0000255" key="6">
    <source>
        <dbReference type="PROSITE-ProRule" id="PRU00651"/>
    </source>
</evidence>
<evidence type="ECO:0000256" key="7">
    <source>
        <dbReference type="SAM" id="MobiDB-lite"/>
    </source>
</evidence>
<evidence type="ECO:0000305" key="8"/>
<reference key="1">
    <citation type="journal article" date="1997" name="J. Biochem.">
        <title>Restricted expression of a member of the transcription elongation factor S-II family in testicular germ cells during and after meiosis.</title>
        <authorList>
            <person name="Umehara T."/>
            <person name="Kida S."/>
            <person name="Hasegawa S."/>
            <person name="Fujimoto H."/>
            <person name="Horikoshi M."/>
        </authorList>
    </citation>
    <scope>NUCLEOTIDE SEQUENCE [MRNA]</scope>
</reference>
<reference key="2">
    <citation type="journal article" date="1998" name="Mamm. Genome">
        <title>Gene organization and chromosome mapping of the testis-specific S-II.</title>
        <authorList>
            <person name="Ito T."/>
            <person name="Seldin M.F."/>
            <person name="Taketo M.M."/>
            <person name="Kubo T."/>
            <person name="Natori S."/>
        </authorList>
    </citation>
    <scope>NUCLEOTIDE SEQUENCE [MRNA]</scope>
    <source>
        <strain>ddY</strain>
        <tissue>Testis</tissue>
    </source>
</reference>
<reference key="3">
    <citation type="journal article" date="1996" name="FEBS Lett.">
        <title>Spermatocyte-specific expression of the gene for mouse testis-specific transcription elongation factor S-II.</title>
        <authorList>
            <person name="Ito T."/>
            <person name="Xu Q."/>
            <person name="Takeuchi H."/>
            <person name="Kubo T."/>
            <person name="Natori S."/>
        </authorList>
    </citation>
    <scope>NUCLEOTIDE SEQUENCE [MRNA] OF 80-190</scope>
</reference>
<accession>Q9QVN7</accession>
<accession>O08667</accession>
<keyword id="KW-0238">DNA-binding</keyword>
<keyword id="KW-1017">Isopeptide bond</keyword>
<keyword id="KW-0479">Metal-binding</keyword>
<keyword id="KW-0539">Nucleus</keyword>
<keyword id="KW-0597">Phosphoprotein</keyword>
<keyword id="KW-1185">Reference proteome</keyword>
<keyword id="KW-0804">Transcription</keyword>
<keyword id="KW-0805">Transcription regulation</keyword>
<keyword id="KW-0832">Ubl conjugation</keyword>
<keyword id="KW-0862">Zinc</keyword>
<keyword id="KW-0863">Zinc-finger</keyword>
<comment type="function">
    <text>Necessary for efficient RNA polymerase II transcription elongation past template-encoded arresting sites. The arresting sites in DNA have the property of trapping a certain fraction of elongating RNA polymerases that pass through, resulting in locked ternary complexes. Cleavage of the nascent transcript by S-II allows the resumption of elongation from the new 3'-terminus.</text>
</comment>
<comment type="subunit">
    <text evidence="1">Interacts with the basal transcription factor GTF2B. Interacts with REXO1 (By similarity).</text>
</comment>
<comment type="subcellular location">
    <subcellularLocation>
        <location>Nucleus</location>
    </subcellularLocation>
</comment>
<comment type="tissue specificity">
    <text>Testis and ovary specific. Specific to testicular germ cells.</text>
</comment>
<comment type="developmental stage">
    <text>Expressed in testicular germ cells during and after meiosis in the course of spermatogenesis, while it is not expressed in premeiotic or early meiotic testicular germ cells.</text>
</comment>
<comment type="similarity">
    <text evidence="8">Belongs to the TFS-II family.</text>
</comment>
<feature type="chain" id="PRO_0000121450" description="Transcription elongation factor A protein 2">
    <location>
        <begin position="1"/>
        <end position="299"/>
    </location>
</feature>
<feature type="domain" description="TFIIS N-terminal" evidence="5">
    <location>
        <begin position="5"/>
        <end position="82"/>
    </location>
</feature>
<feature type="domain" description="TFIIS central" evidence="6">
    <location>
        <begin position="138"/>
        <end position="254"/>
    </location>
</feature>
<feature type="zinc finger region" description="TFIIS-type" evidence="4">
    <location>
        <begin position="257"/>
        <end position="297"/>
    </location>
</feature>
<feature type="region of interest" description="Disordered" evidence="7">
    <location>
        <begin position="82"/>
        <end position="127"/>
    </location>
</feature>
<feature type="compositionally biased region" description="Polar residues" evidence="7">
    <location>
        <begin position="87"/>
        <end position="101"/>
    </location>
</feature>
<feature type="compositionally biased region" description="Basic and acidic residues" evidence="7">
    <location>
        <begin position="102"/>
        <end position="116"/>
    </location>
</feature>
<feature type="binding site" evidence="4">
    <location>
        <position position="261"/>
    </location>
    <ligand>
        <name>Zn(2+)</name>
        <dbReference type="ChEBI" id="CHEBI:29105"/>
    </ligand>
</feature>
<feature type="binding site" evidence="4">
    <location>
        <position position="264"/>
    </location>
    <ligand>
        <name>Zn(2+)</name>
        <dbReference type="ChEBI" id="CHEBI:29105"/>
    </ligand>
</feature>
<feature type="binding site" evidence="4">
    <location>
        <position position="289"/>
    </location>
    <ligand>
        <name>Zn(2+)</name>
        <dbReference type="ChEBI" id="CHEBI:29105"/>
    </ligand>
</feature>
<feature type="binding site" evidence="4">
    <location>
        <position position="292"/>
    </location>
    <ligand>
        <name>Zn(2+)</name>
        <dbReference type="ChEBI" id="CHEBI:29105"/>
    </ligand>
</feature>
<feature type="modified residue" description="Phosphoserine" evidence="2">
    <location>
        <position position="59"/>
    </location>
</feature>
<feature type="modified residue" description="Phosphoserine" evidence="2">
    <location>
        <position position="100"/>
    </location>
</feature>
<feature type="cross-link" description="Glycyl lysine isopeptide (Lys-Gly) (interchain with G-Cter in ubiquitin)" evidence="3">
    <location>
        <position position="57"/>
    </location>
</feature>